<gene>
    <name evidence="1" type="primary">rps18</name>
</gene>
<feature type="chain" id="PRO_0000345585" description="Small ribosomal subunit protein bS18c">
    <location>
        <begin position="1"/>
        <end position="98"/>
    </location>
</feature>
<feature type="region of interest" description="Disordered" evidence="2">
    <location>
        <begin position="1"/>
        <end position="26"/>
    </location>
</feature>
<feature type="compositionally biased region" description="Basic and acidic residues" evidence="2">
    <location>
        <begin position="1"/>
        <end position="13"/>
    </location>
</feature>
<name>RR18_GNEPA</name>
<reference key="1">
    <citation type="journal article" date="2007" name="Mol. Biol. Evol.">
        <title>Chloroplast genome (cpDNA) of Cycas taitungensis and 56 cp protein-coding genes of Gnetum parvifolium: insights into cpDNA evolution and phylogeny of extant seed plants.</title>
        <authorList>
            <person name="Wu C.-S."/>
            <person name="Wang Y.-N."/>
            <person name="Liu S.-M."/>
            <person name="Chaw S.-M."/>
        </authorList>
    </citation>
    <scope>NUCLEOTIDE SEQUENCE [LARGE SCALE GENOMIC DNA]</scope>
</reference>
<reference key="2">
    <citation type="journal article" date="2009" name="Mol. Phylogenet. Evol.">
        <title>Evolution of reduced and compact chloroplast genomes (cpDNAs) in gnetophytes: Selection toward a lower-cost strategy.</title>
        <authorList>
            <person name="Wu C.-S."/>
            <person name="Lai Y.-T."/>
            <person name="Lin C.-P."/>
            <person name="Wang Y.-N."/>
            <person name="Chaw S.-M."/>
        </authorList>
    </citation>
    <scope>NUCLEOTIDE SEQUENCE [LARGE SCALE GENOMIC DNA]</scope>
</reference>
<proteinExistence type="inferred from homology"/>
<dbReference type="EMBL" id="AB295956">
    <property type="protein sequence ID" value="BAF64905.1"/>
    <property type="molecule type" value="Genomic_DNA"/>
</dbReference>
<dbReference type="EMBL" id="AP009569">
    <property type="protein sequence ID" value="BAH11272.1"/>
    <property type="molecule type" value="Genomic_DNA"/>
</dbReference>
<dbReference type="RefSeq" id="YP_002519761.1">
    <property type="nucleotide sequence ID" value="NC_011942.1"/>
</dbReference>
<dbReference type="SMR" id="A6BM60"/>
<dbReference type="GeneID" id="7368155"/>
<dbReference type="GO" id="GO:0009507">
    <property type="term" value="C:chloroplast"/>
    <property type="evidence" value="ECO:0007669"/>
    <property type="project" value="UniProtKB-SubCell"/>
</dbReference>
<dbReference type="GO" id="GO:0005763">
    <property type="term" value="C:mitochondrial small ribosomal subunit"/>
    <property type="evidence" value="ECO:0007669"/>
    <property type="project" value="TreeGrafter"/>
</dbReference>
<dbReference type="GO" id="GO:0070181">
    <property type="term" value="F:small ribosomal subunit rRNA binding"/>
    <property type="evidence" value="ECO:0007669"/>
    <property type="project" value="TreeGrafter"/>
</dbReference>
<dbReference type="GO" id="GO:0003735">
    <property type="term" value="F:structural constituent of ribosome"/>
    <property type="evidence" value="ECO:0007669"/>
    <property type="project" value="InterPro"/>
</dbReference>
<dbReference type="GO" id="GO:0006412">
    <property type="term" value="P:translation"/>
    <property type="evidence" value="ECO:0007669"/>
    <property type="project" value="UniProtKB-UniRule"/>
</dbReference>
<dbReference type="Gene3D" id="4.10.640.10">
    <property type="entry name" value="Ribosomal protein S18"/>
    <property type="match status" value="1"/>
</dbReference>
<dbReference type="HAMAP" id="MF_00270">
    <property type="entry name" value="Ribosomal_bS18"/>
    <property type="match status" value="1"/>
</dbReference>
<dbReference type="InterPro" id="IPR001648">
    <property type="entry name" value="Ribosomal_bS18"/>
</dbReference>
<dbReference type="InterPro" id="IPR036870">
    <property type="entry name" value="Ribosomal_bS18_sf"/>
</dbReference>
<dbReference type="NCBIfam" id="TIGR00165">
    <property type="entry name" value="S18"/>
    <property type="match status" value="1"/>
</dbReference>
<dbReference type="PANTHER" id="PTHR13479">
    <property type="entry name" value="30S RIBOSOMAL PROTEIN S18"/>
    <property type="match status" value="1"/>
</dbReference>
<dbReference type="PANTHER" id="PTHR13479:SF40">
    <property type="entry name" value="SMALL RIBOSOMAL SUBUNIT PROTEIN BS18M"/>
    <property type="match status" value="1"/>
</dbReference>
<dbReference type="Pfam" id="PF01084">
    <property type="entry name" value="Ribosomal_S18"/>
    <property type="match status" value="1"/>
</dbReference>
<dbReference type="PRINTS" id="PR00974">
    <property type="entry name" value="RIBOSOMALS18"/>
</dbReference>
<dbReference type="SUPFAM" id="SSF46911">
    <property type="entry name" value="Ribosomal protein S18"/>
    <property type="match status" value="1"/>
</dbReference>
<protein>
    <recommendedName>
        <fullName evidence="1">Small ribosomal subunit protein bS18c</fullName>
    </recommendedName>
    <alternativeName>
        <fullName evidence="3">30S ribosomal protein S18, chloroplastic</fullName>
    </alternativeName>
</protein>
<comment type="subunit">
    <text evidence="1">Part of the 30S ribosomal subunit.</text>
</comment>
<comment type="subcellular location">
    <subcellularLocation>
        <location>Plastid</location>
        <location>Chloroplast</location>
    </subcellularLocation>
</comment>
<comment type="similarity">
    <text evidence="1">Belongs to the bacterial ribosomal protein bS18 family.</text>
</comment>
<keyword id="KW-0150">Chloroplast</keyword>
<keyword id="KW-0934">Plastid</keyword>
<keyword id="KW-0687">Ribonucleoprotein</keyword>
<keyword id="KW-0689">Ribosomal protein</keyword>
<keyword id="KW-0694">RNA-binding</keyword>
<keyword id="KW-0699">rRNA-binding</keyword>
<accession>A6BM60</accession>
<accession>B7ZI92</accession>
<geneLocation type="chloroplast"/>
<evidence type="ECO:0000255" key="1">
    <source>
        <dbReference type="HAMAP-Rule" id="MF_00270"/>
    </source>
</evidence>
<evidence type="ECO:0000256" key="2">
    <source>
        <dbReference type="SAM" id="MobiDB-lite"/>
    </source>
</evidence>
<evidence type="ECO:0000305" key="3"/>
<organism>
    <name type="scientific">Gnetum parvifolium</name>
    <name type="common">Small-leaved jointfir</name>
    <name type="synonym">Gnetum scandens var. parvifolium</name>
    <dbReference type="NCBI Taxonomy" id="33153"/>
    <lineage>
        <taxon>Eukaryota</taxon>
        <taxon>Viridiplantae</taxon>
        <taxon>Streptophyta</taxon>
        <taxon>Embryophyta</taxon>
        <taxon>Tracheophyta</taxon>
        <taxon>Spermatophyta</taxon>
        <taxon>Gnetopsida</taxon>
        <taxon>Gnetidae</taxon>
        <taxon>Gnetales</taxon>
        <taxon>Gnetaceae</taxon>
        <taxon>Gnetum</taxon>
    </lineage>
</organism>
<sequence length="98" mass="11643">MSKQSFDFKRYKPEAPSGSRKRPLKKFKKPIRIKSEDQINYKNVSLINGFISQRAKILSRKVTKLTWKQQRLMSVAIKRARILSLLPFIVKTKFKKLY</sequence>